<keyword id="KW-0256">Endoplasmic reticulum</keyword>
<keyword id="KW-0349">Heme</keyword>
<keyword id="KW-0408">Iron</keyword>
<keyword id="KW-0443">Lipid metabolism</keyword>
<keyword id="KW-0456">Lyase</keyword>
<keyword id="KW-0472">Membrane</keyword>
<keyword id="KW-0479">Metal-binding</keyword>
<keyword id="KW-0492">Microsome</keyword>
<keyword id="KW-0503">Monooxygenase</keyword>
<keyword id="KW-0560">Oxidoreductase</keyword>
<keyword id="KW-0755">Steroidogenesis</keyword>
<proteinExistence type="evidence at transcript level"/>
<dbReference type="EC" id="1.14.14.19" evidence="2"/>
<dbReference type="EC" id="1.14.14.32" evidence="2"/>
<dbReference type="EMBL" id="AF458331">
    <property type="protein sequence ID" value="AAN86252.1"/>
    <property type="molecule type" value="mRNA"/>
</dbReference>
<dbReference type="SMR" id="Q8HYN0"/>
<dbReference type="UniPathway" id="UPA00788"/>
<dbReference type="GO" id="GO:0005789">
    <property type="term" value="C:endoplasmic reticulum membrane"/>
    <property type="evidence" value="ECO:0007669"/>
    <property type="project" value="UniProtKB-SubCell"/>
</dbReference>
<dbReference type="GO" id="GO:0020037">
    <property type="term" value="F:heme binding"/>
    <property type="evidence" value="ECO:0000250"/>
    <property type="project" value="UniProtKB"/>
</dbReference>
<dbReference type="GO" id="GO:0005506">
    <property type="term" value="F:iron ion binding"/>
    <property type="evidence" value="ECO:0007669"/>
    <property type="project" value="InterPro"/>
</dbReference>
<dbReference type="GO" id="GO:0016829">
    <property type="term" value="F:lyase activity"/>
    <property type="evidence" value="ECO:0007669"/>
    <property type="project" value="UniProtKB-KW"/>
</dbReference>
<dbReference type="GO" id="GO:0004508">
    <property type="term" value="F:steroid 17-alpha-monooxygenase activity"/>
    <property type="evidence" value="ECO:0000250"/>
    <property type="project" value="UniProtKB"/>
</dbReference>
<dbReference type="GO" id="GO:0006704">
    <property type="term" value="P:glucocorticoid biosynthetic process"/>
    <property type="evidence" value="ECO:0007669"/>
    <property type="project" value="UniProtKB-UniPathway"/>
</dbReference>
<dbReference type="GO" id="GO:0042446">
    <property type="term" value="P:hormone biosynthetic process"/>
    <property type="evidence" value="ECO:0000250"/>
    <property type="project" value="UniProtKB"/>
</dbReference>
<dbReference type="GO" id="GO:0042448">
    <property type="term" value="P:progesterone metabolic process"/>
    <property type="evidence" value="ECO:0000250"/>
    <property type="project" value="UniProtKB"/>
</dbReference>
<dbReference type="GO" id="GO:0008202">
    <property type="term" value="P:steroid metabolic process"/>
    <property type="evidence" value="ECO:0000250"/>
    <property type="project" value="UniProtKB"/>
</dbReference>
<dbReference type="CDD" id="cd20673">
    <property type="entry name" value="CYP17A1"/>
    <property type="match status" value="1"/>
</dbReference>
<dbReference type="FunFam" id="1.10.630.10:FF:000002">
    <property type="entry name" value="Cytochrome P450 1A1"/>
    <property type="match status" value="1"/>
</dbReference>
<dbReference type="Gene3D" id="1.10.630.10">
    <property type="entry name" value="Cytochrome P450"/>
    <property type="match status" value="1"/>
</dbReference>
<dbReference type="InterPro" id="IPR001128">
    <property type="entry name" value="Cyt_P450"/>
</dbReference>
<dbReference type="InterPro" id="IPR017972">
    <property type="entry name" value="Cyt_P450_CS"/>
</dbReference>
<dbReference type="InterPro" id="IPR002401">
    <property type="entry name" value="Cyt_P450_E_grp-I"/>
</dbReference>
<dbReference type="InterPro" id="IPR036396">
    <property type="entry name" value="Cyt_P450_sf"/>
</dbReference>
<dbReference type="PANTHER" id="PTHR24289">
    <property type="entry name" value="STEROID 17-ALPHA-HYDROXYLASE/17,20 LYASE"/>
    <property type="match status" value="1"/>
</dbReference>
<dbReference type="PANTHER" id="PTHR24289:SF13">
    <property type="entry name" value="STEROID 17-ALPHA-HYDROXYLASE_17,20 LYASE"/>
    <property type="match status" value="1"/>
</dbReference>
<dbReference type="Pfam" id="PF00067">
    <property type="entry name" value="p450"/>
    <property type="match status" value="1"/>
</dbReference>
<dbReference type="PRINTS" id="PR00463">
    <property type="entry name" value="EP450I"/>
</dbReference>
<dbReference type="PRINTS" id="PR00385">
    <property type="entry name" value="P450"/>
</dbReference>
<dbReference type="SUPFAM" id="SSF48264">
    <property type="entry name" value="Cytochrome P450"/>
    <property type="match status" value="1"/>
</dbReference>
<dbReference type="PROSITE" id="PS00086">
    <property type="entry name" value="CYTOCHROME_P450"/>
    <property type="match status" value="1"/>
</dbReference>
<organism>
    <name type="scientific">Papio cynocephalus</name>
    <name type="common">Yellow baboon</name>
    <dbReference type="NCBI Taxonomy" id="9556"/>
    <lineage>
        <taxon>Eukaryota</taxon>
        <taxon>Metazoa</taxon>
        <taxon>Chordata</taxon>
        <taxon>Craniata</taxon>
        <taxon>Vertebrata</taxon>
        <taxon>Euteleostomi</taxon>
        <taxon>Mammalia</taxon>
        <taxon>Eutheria</taxon>
        <taxon>Euarchontoglires</taxon>
        <taxon>Primates</taxon>
        <taxon>Haplorrhini</taxon>
        <taxon>Catarrhini</taxon>
        <taxon>Cercopithecidae</taxon>
        <taxon>Cercopithecinae</taxon>
        <taxon>Papio</taxon>
    </lineage>
</organism>
<reference key="1">
    <citation type="journal article" date="2002" name="Endocrinology">
        <title>Molecular evolution of adrenarche: structural and functional analysis of p450c17 from four primate species.</title>
        <authorList>
            <person name="Arlt W."/>
            <person name="Martens J.W."/>
            <person name="Song M."/>
            <person name="Wang J.T."/>
            <person name="Auchus R.J."/>
            <person name="Miller W.L."/>
        </authorList>
    </citation>
    <scope>NUCLEOTIDE SEQUENCE [MRNA]</scope>
</reference>
<sequence>MWELVALLLLTLAYLFWPKRRCPGAKYPKSLLSLPLVGSLPFLPRHGHMHNNFFKLQKKYGPIYSVRMGTKTTVIVGHHQLAKEVLIKKGKDFSGRPQVTTLDILSNNRKGIAFADYGAHWQLHRRLAMATFALFKDGDQKLEKIICQEISTLCDMLATHNGQTIDISFPVFVAITNVISLICFNISYKNGDPELKIVHNYNEGIIDSLGKESLVDLFPWLKVFPNKTLEKLKRHVKTRNDLLTKIFENYKEKFRSDSITNMLDVLMQAKMNSDNGNAGPDQDSELLSDNHILTTIGDIFGAGVETTTSVVKWIVAFLLHNPQVKKKLYEEIDQNVGFSRTPTISDRNRLLLLEATIREVLRIRPVAPMLIPHKANVDSSIGEFAVDKGTHVIINLWALHHNEKEWHQPDQFMPERFLNPAGTQLISPSLSYLPFGAGPRSCIGEILARQELFLIMAWLLQRFDLEVPDDGQLPSLEGNPKVVFLIDSFKVKIKVRQAWREAQAEGST</sequence>
<protein>
    <recommendedName>
        <fullName>Steroid 17-alpha-hydroxylase/17,20 lyase</fullName>
        <ecNumber evidence="2">1.14.14.19</ecNumber>
    </recommendedName>
    <alternativeName>
        <fullName>17-alpha-hydroxyprogesterone aldolase</fullName>
        <ecNumber evidence="2">1.14.14.32</ecNumber>
    </alternativeName>
    <alternativeName>
        <fullName>CYPXVII</fullName>
    </alternativeName>
    <alternativeName>
        <fullName>Cytochrome P450 17A1</fullName>
    </alternativeName>
    <alternativeName>
        <fullName>Cytochrome P450-C17</fullName>
        <shortName>Cytochrome P450c17</shortName>
    </alternativeName>
    <alternativeName>
        <fullName>Steroid 17-alpha-monooxygenase</fullName>
    </alternativeName>
</protein>
<gene>
    <name type="primary">CYP17A1</name>
    <name type="synonym">CYP17</name>
</gene>
<name>CP17A_PAPCY</name>
<evidence type="ECO:0000250" key="1"/>
<evidence type="ECO:0000250" key="2">
    <source>
        <dbReference type="UniProtKB" id="P05093"/>
    </source>
</evidence>
<evidence type="ECO:0000305" key="3"/>
<accession>Q8HYN0</accession>
<comment type="function">
    <text evidence="2">A cytochrome P450 monooxygenase involved in corticoid and androgen biosynthesis. Catalyzes 17-alpha hydroxylation of C21 steroids, which is common for both pathways. A second oxidative step, required only for androgen synthesis, involves an acyl-carbon cleavage. The 17-alpha hydroxy intermediates, as part of adrenal glucocorticoids biosynthesis pathway, are precursors of cortisol. Hydroxylates steroid hormones, pregnenolone and progesterone to form 17-alpha hydroxy metabolites, followed by the cleavage of the C17-C20 bond to form C19 steroids, dehydroepiandrosterone (DHEA) and androstenedione. Has 16-alpha hydroxylase activity. Catalyzes 16-alpha hydroxylation of 17-alpha hydroxy pregnenolone, followed by the cleavage of the C17-C20 bond to form 16-alpha-hydroxy DHEA. Also 16-alpha hydroxylates androgens, relevant for estriol synthesis. Mechanistically, uses molecular oxygen inserting one oxygen atom into a substrate, and reducing the second into a water molecule, with two electrons provided by NADPH via cytochrome P450 reductase (CPR; NADPH-ferrihemoprotein reductase).</text>
</comment>
<comment type="catalytic activity">
    <reaction evidence="2">
        <text>a C21-steroid + reduced [NADPH--hemoprotein reductase] + O2 = a 17alpha-hydroxy-C21-steroid + oxidized [NADPH--hemoprotein reductase] + H2O + H(+)</text>
        <dbReference type="Rhea" id="RHEA:65760"/>
        <dbReference type="Rhea" id="RHEA-COMP:11964"/>
        <dbReference type="Rhea" id="RHEA-COMP:11965"/>
        <dbReference type="ChEBI" id="CHEBI:15377"/>
        <dbReference type="ChEBI" id="CHEBI:15378"/>
        <dbReference type="ChEBI" id="CHEBI:15379"/>
        <dbReference type="ChEBI" id="CHEBI:57618"/>
        <dbReference type="ChEBI" id="CHEBI:58210"/>
        <dbReference type="ChEBI" id="CHEBI:61313"/>
        <dbReference type="ChEBI" id="CHEBI:138141"/>
        <dbReference type="EC" id="1.14.14.19"/>
    </reaction>
    <physiologicalReaction direction="left-to-right" evidence="2">
        <dbReference type="Rhea" id="RHEA:65761"/>
    </physiologicalReaction>
</comment>
<comment type="catalytic activity">
    <reaction evidence="2">
        <text>progesterone + reduced [NADPH--hemoprotein reductase] + O2 = 17alpha-hydroxyprogesterone + oxidized [NADPH--hemoprotein reductase] + H2O + H(+)</text>
        <dbReference type="Rhea" id="RHEA:46308"/>
        <dbReference type="Rhea" id="RHEA-COMP:11964"/>
        <dbReference type="Rhea" id="RHEA-COMP:11965"/>
        <dbReference type="ChEBI" id="CHEBI:15377"/>
        <dbReference type="ChEBI" id="CHEBI:15378"/>
        <dbReference type="ChEBI" id="CHEBI:15379"/>
        <dbReference type="ChEBI" id="CHEBI:17026"/>
        <dbReference type="ChEBI" id="CHEBI:17252"/>
        <dbReference type="ChEBI" id="CHEBI:57618"/>
        <dbReference type="ChEBI" id="CHEBI:58210"/>
        <dbReference type="EC" id="1.14.14.19"/>
    </reaction>
    <physiologicalReaction direction="left-to-right" evidence="2">
        <dbReference type="Rhea" id="RHEA:46309"/>
    </physiologicalReaction>
</comment>
<comment type="catalytic activity">
    <reaction evidence="2">
        <text>pregnenolone + reduced [NADPH--hemoprotein reductase] + O2 = 17alpha-hydroxypregnenolone + oxidized [NADPH--hemoprotein reductase] + H2O + H(+)</text>
        <dbReference type="Rhea" id="RHEA:50236"/>
        <dbReference type="Rhea" id="RHEA-COMP:11964"/>
        <dbReference type="Rhea" id="RHEA-COMP:11965"/>
        <dbReference type="ChEBI" id="CHEBI:15377"/>
        <dbReference type="ChEBI" id="CHEBI:15378"/>
        <dbReference type="ChEBI" id="CHEBI:15379"/>
        <dbReference type="ChEBI" id="CHEBI:16581"/>
        <dbReference type="ChEBI" id="CHEBI:28750"/>
        <dbReference type="ChEBI" id="CHEBI:57618"/>
        <dbReference type="ChEBI" id="CHEBI:58210"/>
        <dbReference type="EC" id="1.14.14.19"/>
    </reaction>
    <physiologicalReaction direction="left-to-right" evidence="2">
        <dbReference type="Rhea" id="RHEA:50237"/>
    </physiologicalReaction>
</comment>
<comment type="catalytic activity">
    <reaction evidence="2">
        <text>17alpha-hydroxyprogesterone + reduced [NADPH--hemoprotein reductase] + O2 = androst-4-ene-3,17-dione + acetate + oxidized [NADPH--hemoprotein reductase] + H2O + 2 H(+)</text>
        <dbReference type="Rhea" id="RHEA:14753"/>
        <dbReference type="Rhea" id="RHEA-COMP:11964"/>
        <dbReference type="Rhea" id="RHEA-COMP:11965"/>
        <dbReference type="ChEBI" id="CHEBI:15377"/>
        <dbReference type="ChEBI" id="CHEBI:15378"/>
        <dbReference type="ChEBI" id="CHEBI:15379"/>
        <dbReference type="ChEBI" id="CHEBI:16422"/>
        <dbReference type="ChEBI" id="CHEBI:17252"/>
        <dbReference type="ChEBI" id="CHEBI:30089"/>
        <dbReference type="ChEBI" id="CHEBI:57618"/>
        <dbReference type="ChEBI" id="CHEBI:58210"/>
        <dbReference type="EC" id="1.14.14.32"/>
    </reaction>
    <physiologicalReaction direction="left-to-right" evidence="2">
        <dbReference type="Rhea" id="RHEA:14754"/>
    </physiologicalReaction>
</comment>
<comment type="catalytic activity">
    <reaction evidence="2">
        <text>17alpha-hydroxyprogesterone + reduced [NADPH--hemoprotein reductase] + O2 = 16alpha,17alpha-dihydroxyprogesterone + oxidized [NADPH--hemoprotein reductase] + H2O + H(+)</text>
        <dbReference type="Rhea" id="RHEA:53216"/>
        <dbReference type="Rhea" id="RHEA-COMP:11964"/>
        <dbReference type="Rhea" id="RHEA-COMP:11965"/>
        <dbReference type="ChEBI" id="CHEBI:763"/>
        <dbReference type="ChEBI" id="CHEBI:15377"/>
        <dbReference type="ChEBI" id="CHEBI:15378"/>
        <dbReference type="ChEBI" id="CHEBI:15379"/>
        <dbReference type="ChEBI" id="CHEBI:17252"/>
        <dbReference type="ChEBI" id="CHEBI:57618"/>
        <dbReference type="ChEBI" id="CHEBI:58210"/>
    </reaction>
    <physiologicalReaction direction="left-to-right" evidence="2">
        <dbReference type="Rhea" id="RHEA:53217"/>
    </physiologicalReaction>
</comment>
<comment type="catalytic activity">
    <reaction evidence="2">
        <text>16alpha,17alpha-dihydroxyprogesterone + reduced [NADPH--hemoprotein reductase] + O2 = 6beta,16alpha,17alpha-trihydroxyprogesterone + oxidized [NADPH--hemoprotein reductase] + H2O + H(+)</text>
        <dbReference type="Rhea" id="RHEA:53220"/>
        <dbReference type="Rhea" id="RHEA-COMP:11964"/>
        <dbReference type="Rhea" id="RHEA-COMP:11965"/>
        <dbReference type="ChEBI" id="CHEBI:763"/>
        <dbReference type="ChEBI" id="CHEBI:15377"/>
        <dbReference type="ChEBI" id="CHEBI:15378"/>
        <dbReference type="ChEBI" id="CHEBI:15379"/>
        <dbReference type="ChEBI" id="CHEBI:57618"/>
        <dbReference type="ChEBI" id="CHEBI:58210"/>
        <dbReference type="ChEBI" id="CHEBI:137046"/>
    </reaction>
    <physiologicalReaction direction="left-to-right" evidence="2">
        <dbReference type="Rhea" id="RHEA:53221"/>
    </physiologicalReaction>
</comment>
<comment type="catalytic activity">
    <reaction evidence="2">
        <text>17alpha-hydroxypregnenolone + reduced [NADPH--hemoprotein reductase] + O2 = 3beta-hydroxyandrost-5-en-17-one + acetate + oxidized [NADPH--hemoprotein reductase] + H2O + 2 H(+)</text>
        <dbReference type="Rhea" id="RHEA:50244"/>
        <dbReference type="Rhea" id="RHEA-COMP:11964"/>
        <dbReference type="Rhea" id="RHEA-COMP:11965"/>
        <dbReference type="ChEBI" id="CHEBI:15377"/>
        <dbReference type="ChEBI" id="CHEBI:15378"/>
        <dbReference type="ChEBI" id="CHEBI:15379"/>
        <dbReference type="ChEBI" id="CHEBI:28689"/>
        <dbReference type="ChEBI" id="CHEBI:28750"/>
        <dbReference type="ChEBI" id="CHEBI:30089"/>
        <dbReference type="ChEBI" id="CHEBI:57618"/>
        <dbReference type="ChEBI" id="CHEBI:58210"/>
        <dbReference type="EC" id="1.14.14.32"/>
    </reaction>
    <physiologicalReaction direction="left-to-right" evidence="2">
        <dbReference type="Rhea" id="RHEA:50245"/>
    </physiologicalReaction>
</comment>
<comment type="catalytic activity">
    <reaction evidence="2">
        <text>16alpha,17alpha-dihydroxypregnenolone + reduced [NADPH--hemoprotein reductase] + O2 = 3beta,16alpha-dihydroxy-androst-5-en-17-one + acetate + oxidized [NADPH--hemoprotein reductase] + H2O + 2 H(+)</text>
        <dbReference type="Rhea" id="RHEA:53224"/>
        <dbReference type="Rhea" id="RHEA-COMP:11964"/>
        <dbReference type="Rhea" id="RHEA-COMP:11965"/>
        <dbReference type="ChEBI" id="CHEBI:15377"/>
        <dbReference type="ChEBI" id="CHEBI:15378"/>
        <dbReference type="ChEBI" id="CHEBI:15379"/>
        <dbReference type="ChEBI" id="CHEBI:27771"/>
        <dbReference type="ChEBI" id="CHEBI:30089"/>
        <dbReference type="ChEBI" id="CHEBI:57618"/>
        <dbReference type="ChEBI" id="CHEBI:58210"/>
        <dbReference type="ChEBI" id="CHEBI:137049"/>
    </reaction>
    <physiologicalReaction direction="left-to-right" evidence="2">
        <dbReference type="Rhea" id="RHEA:53225"/>
    </physiologicalReaction>
</comment>
<comment type="catalytic activity">
    <reaction evidence="2">
        <text>3beta-hydroxyandrost-5-en-17-one + reduced [NADPH--hemoprotein reductase] + O2 = 3beta,16alpha-dihydroxy-androst-5-en-17-one + oxidized [NADPH--hemoprotein reductase] + H2O + H(+)</text>
        <dbReference type="Rhea" id="RHEA:47220"/>
        <dbReference type="Rhea" id="RHEA-COMP:11964"/>
        <dbReference type="Rhea" id="RHEA-COMP:11965"/>
        <dbReference type="ChEBI" id="CHEBI:15377"/>
        <dbReference type="ChEBI" id="CHEBI:15378"/>
        <dbReference type="ChEBI" id="CHEBI:15379"/>
        <dbReference type="ChEBI" id="CHEBI:27771"/>
        <dbReference type="ChEBI" id="CHEBI:28689"/>
        <dbReference type="ChEBI" id="CHEBI:57618"/>
        <dbReference type="ChEBI" id="CHEBI:58210"/>
    </reaction>
    <physiologicalReaction direction="left-to-right" evidence="2">
        <dbReference type="Rhea" id="RHEA:47221"/>
    </physiologicalReaction>
</comment>
<comment type="catalytic activity">
    <reaction evidence="2">
        <text>androst-4-ene-3,17-dione + reduced [NADPH--hemoprotein reductase] + O2 = 16alpha-hydroxyandrost-4-ene-3,17-dione + oxidized [NADPH--hemoprotein reductase] + H2O + H(+)</text>
        <dbReference type="Rhea" id="RHEA:53228"/>
        <dbReference type="Rhea" id="RHEA-COMP:11964"/>
        <dbReference type="Rhea" id="RHEA-COMP:11965"/>
        <dbReference type="ChEBI" id="CHEBI:15377"/>
        <dbReference type="ChEBI" id="CHEBI:15378"/>
        <dbReference type="ChEBI" id="CHEBI:15379"/>
        <dbReference type="ChEBI" id="CHEBI:16422"/>
        <dbReference type="ChEBI" id="CHEBI:27582"/>
        <dbReference type="ChEBI" id="CHEBI:57618"/>
        <dbReference type="ChEBI" id="CHEBI:58210"/>
    </reaction>
    <physiologicalReaction direction="left-to-right" evidence="2">
        <dbReference type="Rhea" id="RHEA:53229"/>
    </physiologicalReaction>
</comment>
<comment type="cofactor">
    <cofactor evidence="2">
        <name>heme</name>
        <dbReference type="ChEBI" id="CHEBI:30413"/>
    </cofactor>
</comment>
<comment type="activity regulation">
    <text evidence="2">Regulated predominantly by intracellular cAMP levels. The 17,20-lyase activity is stimulated by cytochrome b5, which acts as an allosteric effector increasing the Vmax of the lyase activity.</text>
</comment>
<comment type="pathway">
    <text evidence="2">Steroid hormone biosynthesis.</text>
</comment>
<comment type="pathway">
    <text evidence="2">Steroid biosynthesis; glucocorticoid biosynthesis.</text>
</comment>
<comment type="subcellular location">
    <subcellularLocation>
        <location evidence="2">Endoplasmic reticulum membrane</location>
    </subcellularLocation>
    <subcellularLocation>
        <location evidence="2">Microsome membrane</location>
    </subcellularLocation>
</comment>
<comment type="similarity">
    <text evidence="3">Belongs to the cytochrome P450 family.</text>
</comment>
<feature type="chain" id="PRO_0000051937" description="Steroid 17-alpha-hydroxylase/17,20 lyase">
    <location>
        <begin position="1"/>
        <end position="508"/>
    </location>
</feature>
<feature type="binding site" evidence="2">
    <location>
        <position position="202"/>
    </location>
    <ligand>
        <name>substrate</name>
    </ligand>
</feature>
<feature type="binding site" description="axial binding residue" evidence="1">
    <location>
        <position position="442"/>
    </location>
    <ligand>
        <name>heme</name>
        <dbReference type="ChEBI" id="CHEBI:30413"/>
    </ligand>
    <ligandPart>
        <name>Fe</name>
        <dbReference type="ChEBI" id="CHEBI:18248"/>
    </ligandPart>
</feature>